<evidence type="ECO:0000250" key="1">
    <source>
        <dbReference type="UniProtKB" id="Q9UT76"/>
    </source>
</evidence>
<evidence type="ECO:0000256" key="2">
    <source>
        <dbReference type="SAM" id="MobiDB-lite"/>
    </source>
</evidence>
<evidence type="ECO:0000269" key="3">
    <source>
    </source>
</evidence>
<evidence type="ECO:0000269" key="4">
    <source>
    </source>
</evidence>
<evidence type="ECO:0000269" key="5">
    <source>
    </source>
</evidence>
<evidence type="ECO:0000269" key="6">
    <source>
    </source>
</evidence>
<evidence type="ECO:0000305" key="7"/>
<gene>
    <name type="primary">GCD7</name>
    <name type="synonym">TIF222</name>
    <name type="ordered locus">YLR291C</name>
    <name type="ORF">L8003.17</name>
</gene>
<name>EI2BB_YEAST</name>
<protein>
    <recommendedName>
        <fullName>Translation initiation factor eIF2B subunit beta</fullName>
    </recommendedName>
    <alternativeName>
        <fullName>GCD complex subunit GCD7</fullName>
    </alternativeName>
    <alternativeName>
        <fullName>Guanine nucleotide exchange factor subunit GCD7</fullName>
    </alternativeName>
    <alternativeName>
        <fullName>eIF2B GDP-GTP exchange factor subunit beta</fullName>
    </alternativeName>
</protein>
<sequence length="381" mass="42570">MSSQAFTSVHPNAATSDVNVTIDTFVAKLKRRQVQGSYAIALETLQLLMRFISAARWNHVNDLIEQIRDLGNSLEKAHPTAFSCGNVIRRILAVLRDEVEEDTMSTTVTSTSVAEPLISSMFNLLQKPEQPHQNRKNSSGSSSMKTKTDYRQVAIQGIKDLIDEIKNIDEGIQQIAIDLIHDHEILLTPTPDSKTVLKFLITARERSNRTFTVLVTEGFPNNTKNAHEFAKKLAQHNIETLVVPDSAVFALMSRVGKVIIGTKAVFVNGGTISSNSGVSSVCECAREFRTPVFAVAGLYKLSPLYPFDVEKFVEFGGSQRILPRMDPRKRLDTVNQITDYVPPENIDIYITNVGGFNPSFIYRIAWDNYKQIDVHLDKNKA</sequence>
<dbReference type="EMBL" id="L07116">
    <property type="protein sequence ID" value="AAA34634.1"/>
    <property type="molecule type" value="Genomic_DNA"/>
</dbReference>
<dbReference type="EMBL" id="U17243">
    <property type="protein sequence ID" value="AAB67337.1"/>
    <property type="molecule type" value="Genomic_DNA"/>
</dbReference>
<dbReference type="EMBL" id="BK006945">
    <property type="protein sequence ID" value="DAA09603.1"/>
    <property type="molecule type" value="Genomic_DNA"/>
</dbReference>
<dbReference type="PIR" id="B48156">
    <property type="entry name" value="B48156"/>
</dbReference>
<dbReference type="RefSeq" id="NP_013394.1">
    <property type="nucleotide sequence ID" value="NM_001182179.1"/>
</dbReference>
<dbReference type="PDB" id="6I3M">
    <property type="method" value="EM"/>
    <property type="resolution" value="3.93 A"/>
    <property type="chains" value="E/F=1-381"/>
</dbReference>
<dbReference type="PDB" id="6I7T">
    <property type="method" value="EM"/>
    <property type="resolution" value="4.61 A"/>
    <property type="chains" value="E/F=1-381"/>
</dbReference>
<dbReference type="PDB" id="6QG0">
    <property type="method" value="EM"/>
    <property type="resolution" value="4.20 A"/>
    <property type="chains" value="C/D=1-381"/>
</dbReference>
<dbReference type="PDB" id="6QG1">
    <property type="method" value="EM"/>
    <property type="resolution" value="4.20 A"/>
    <property type="chains" value="C/D=1-381"/>
</dbReference>
<dbReference type="PDB" id="6QG2">
    <property type="method" value="EM"/>
    <property type="resolution" value="4.60 A"/>
    <property type="chains" value="C/D=1-381"/>
</dbReference>
<dbReference type="PDB" id="6QG3">
    <property type="method" value="EM"/>
    <property type="resolution" value="9.40 A"/>
    <property type="chains" value="C/D=1-381"/>
</dbReference>
<dbReference type="PDB" id="6QG5">
    <property type="method" value="EM"/>
    <property type="resolution" value="10.10 A"/>
    <property type="chains" value="C/D=1-381"/>
</dbReference>
<dbReference type="PDB" id="6QG6">
    <property type="method" value="EM"/>
    <property type="resolution" value="4.65 A"/>
    <property type="chains" value="C/D=1-381"/>
</dbReference>
<dbReference type="PDBsum" id="6I3M"/>
<dbReference type="PDBsum" id="6I7T"/>
<dbReference type="PDBsum" id="6QG0"/>
<dbReference type="PDBsum" id="6QG1"/>
<dbReference type="PDBsum" id="6QG2"/>
<dbReference type="PDBsum" id="6QG3"/>
<dbReference type="PDBsum" id="6QG5"/>
<dbReference type="PDBsum" id="6QG6"/>
<dbReference type="EMDB" id="EMD-4404"/>
<dbReference type="EMDB" id="EMD-4428"/>
<dbReference type="EMDB" id="EMD-4543"/>
<dbReference type="EMDB" id="EMD-4544"/>
<dbReference type="EMDB" id="EMD-4545"/>
<dbReference type="EMDB" id="EMD-4546"/>
<dbReference type="EMDB" id="EMD-4547"/>
<dbReference type="EMDB" id="EMD-4548"/>
<dbReference type="SMR" id="P32502"/>
<dbReference type="BioGRID" id="31557">
    <property type="interactions" value="428"/>
</dbReference>
<dbReference type="ComplexPortal" id="CPX-429">
    <property type="entry name" value="Eukaryotic translation initiation factor 2B complex"/>
</dbReference>
<dbReference type="DIP" id="DIP-1185N"/>
<dbReference type="FunCoup" id="P32502">
    <property type="interactions" value="1260"/>
</dbReference>
<dbReference type="IntAct" id="P32502">
    <property type="interactions" value="160"/>
</dbReference>
<dbReference type="MINT" id="P32502"/>
<dbReference type="STRING" id="4932.YLR291C"/>
<dbReference type="iPTMnet" id="P32502"/>
<dbReference type="PaxDb" id="4932-YLR291C"/>
<dbReference type="PeptideAtlas" id="P32502"/>
<dbReference type="EnsemblFungi" id="YLR291C_mRNA">
    <property type="protein sequence ID" value="YLR291C"/>
    <property type="gene ID" value="YLR291C"/>
</dbReference>
<dbReference type="GeneID" id="850998"/>
<dbReference type="KEGG" id="sce:YLR291C"/>
<dbReference type="AGR" id="SGD:S000004282"/>
<dbReference type="SGD" id="S000004282">
    <property type="gene designation" value="GCD7"/>
</dbReference>
<dbReference type="VEuPathDB" id="FungiDB:YLR291C"/>
<dbReference type="eggNOG" id="KOG1465">
    <property type="taxonomic scope" value="Eukaryota"/>
</dbReference>
<dbReference type="GeneTree" id="ENSGT00550000074908"/>
<dbReference type="HOGENOM" id="CLU_016218_4_3_1"/>
<dbReference type="InParanoid" id="P32502"/>
<dbReference type="OMA" id="SHSCAVA"/>
<dbReference type="OrthoDB" id="269919at2759"/>
<dbReference type="BioCyc" id="YEAST:G3O-32386-MONOMER"/>
<dbReference type="Reactome" id="R-SCE-72731">
    <property type="pathway name" value="Recycling of eIF2:GDP"/>
</dbReference>
<dbReference type="BioGRID-ORCS" id="850998">
    <property type="hits" value="0 hits in 10 CRISPR screens"/>
</dbReference>
<dbReference type="ChiTaRS" id="GCD7">
    <property type="organism name" value="yeast"/>
</dbReference>
<dbReference type="PRO" id="PR:P32502"/>
<dbReference type="Proteomes" id="UP000002311">
    <property type="component" value="Chromosome XII"/>
</dbReference>
<dbReference type="RNAct" id="P32502">
    <property type="molecule type" value="protein"/>
</dbReference>
<dbReference type="GO" id="GO:0005829">
    <property type="term" value="C:cytosol"/>
    <property type="evidence" value="ECO:0007005"/>
    <property type="project" value="SGD"/>
</dbReference>
<dbReference type="GO" id="GO:0005851">
    <property type="term" value="C:eukaryotic translation initiation factor 2B complex"/>
    <property type="evidence" value="ECO:0000314"/>
    <property type="project" value="SGD"/>
</dbReference>
<dbReference type="GO" id="GO:0032045">
    <property type="term" value="C:guanyl-nucleotide exchange factor complex"/>
    <property type="evidence" value="ECO:0000314"/>
    <property type="project" value="ComplexPortal"/>
</dbReference>
<dbReference type="GO" id="GO:0005739">
    <property type="term" value="C:mitochondrion"/>
    <property type="evidence" value="ECO:0007005"/>
    <property type="project" value="SGD"/>
</dbReference>
<dbReference type="GO" id="GO:0030234">
    <property type="term" value="F:enzyme regulator activity"/>
    <property type="evidence" value="ECO:0000315"/>
    <property type="project" value="SGD"/>
</dbReference>
<dbReference type="GO" id="GO:0003743">
    <property type="term" value="F:translation initiation factor activity"/>
    <property type="evidence" value="ECO:0000316"/>
    <property type="project" value="SGD"/>
</dbReference>
<dbReference type="GO" id="GO:0002183">
    <property type="term" value="P:cytoplasmic translational initiation"/>
    <property type="evidence" value="ECO:0000250"/>
    <property type="project" value="UniProtKB"/>
</dbReference>
<dbReference type="GO" id="GO:0006446">
    <property type="term" value="P:regulation of translational initiation"/>
    <property type="evidence" value="ECO:0000314"/>
    <property type="project" value="SGD"/>
</dbReference>
<dbReference type="GO" id="GO:0006413">
    <property type="term" value="P:translational initiation"/>
    <property type="evidence" value="ECO:0000318"/>
    <property type="project" value="GO_Central"/>
</dbReference>
<dbReference type="FunFam" id="1.20.120.420:FF:000009">
    <property type="entry name" value="Gcd7p"/>
    <property type="match status" value="1"/>
</dbReference>
<dbReference type="FunFam" id="3.40.50.10470:FF:000009">
    <property type="entry name" value="Translation initiation factor eIF2B subunit"/>
    <property type="match status" value="1"/>
</dbReference>
<dbReference type="Gene3D" id="1.20.120.420">
    <property type="entry name" value="translation initiation factor eif-2b, domain 1"/>
    <property type="match status" value="1"/>
</dbReference>
<dbReference type="Gene3D" id="3.40.50.10470">
    <property type="entry name" value="Translation initiation factor eif-2b, domain 2"/>
    <property type="match status" value="1"/>
</dbReference>
<dbReference type="InterPro" id="IPR051855">
    <property type="entry name" value="eIF2B_beta_subunit"/>
</dbReference>
<dbReference type="InterPro" id="IPR000649">
    <property type="entry name" value="IF-2B-related"/>
</dbReference>
<dbReference type="InterPro" id="IPR042529">
    <property type="entry name" value="IF_2B-like_C"/>
</dbReference>
<dbReference type="InterPro" id="IPR027363">
    <property type="entry name" value="M1Pi_N"/>
</dbReference>
<dbReference type="InterPro" id="IPR037171">
    <property type="entry name" value="NagB/RpiA_transferase-like"/>
</dbReference>
<dbReference type="PANTHER" id="PTHR45859">
    <property type="entry name" value="TRANSLATION INITIATION FACTOR EIF-2B SUBUNIT BETA"/>
    <property type="match status" value="1"/>
</dbReference>
<dbReference type="PANTHER" id="PTHR45859:SF1">
    <property type="entry name" value="TRANSLATION INITIATION FACTOR EIF-2B SUBUNIT BETA"/>
    <property type="match status" value="1"/>
</dbReference>
<dbReference type="Pfam" id="PF01008">
    <property type="entry name" value="IF-2B"/>
    <property type="match status" value="1"/>
</dbReference>
<dbReference type="SUPFAM" id="SSF100950">
    <property type="entry name" value="NagB/RpiA/CoA transferase-like"/>
    <property type="match status" value="1"/>
</dbReference>
<accession>P32502</accession>
<accession>D6VYT7</accession>
<feature type="chain" id="PRO_0000156066" description="Translation initiation factor eIF2B subunit beta">
    <location>
        <begin position="1"/>
        <end position="381"/>
    </location>
</feature>
<feature type="region of interest" description="Disordered" evidence="2">
    <location>
        <begin position="125"/>
        <end position="148"/>
    </location>
</feature>
<feature type="compositionally biased region" description="Polar residues" evidence="2">
    <location>
        <begin position="136"/>
        <end position="145"/>
    </location>
</feature>
<organism>
    <name type="scientific">Saccharomyces cerevisiae (strain ATCC 204508 / S288c)</name>
    <name type="common">Baker's yeast</name>
    <dbReference type="NCBI Taxonomy" id="559292"/>
    <lineage>
        <taxon>Eukaryota</taxon>
        <taxon>Fungi</taxon>
        <taxon>Dikarya</taxon>
        <taxon>Ascomycota</taxon>
        <taxon>Saccharomycotina</taxon>
        <taxon>Saccharomycetes</taxon>
        <taxon>Saccharomycetales</taxon>
        <taxon>Saccharomycetaceae</taxon>
        <taxon>Saccharomyces</taxon>
    </lineage>
</organism>
<comment type="function">
    <text evidence="1 5 6">Acts as a component of the translation initiation factor 2B (eIF2B) complex, which catalyzes the exchange of GDP for GTP on the eukaryotic initiation factor 2 (eIF2) complex gamma subunit. Its guanine nucleotide exchange factor activity is repressed when bound to eIF2 complex phosphorylated on the alpha subunit, thereby limiting the amount of methionyl-initiator methionine tRNA available to the ribosome and consequently global translation is repressed (By similarity). It activates the synthesis of GCN4 in yeast under amino acid starvation conditions by suppressing the inhibitory effects of multiple AUG codons present in the leader of GCN4 mRNA. It may promote either repression or activation of GCN4 expression depending on amino acid availability. GCD6 and GCD7 repress GCN4 expression at the translational level by ensuring that ribosomes which have translated UORF1 will reinitiate at UORF2, -3, or -4 and thus fail to reach the GCN4 start site.</text>
</comment>
<comment type="subunit">
    <text evidence="1 4 5 6">Component of the translation initiation factor 2B (eIF2B) complex which is a heterodecamer of two sets of five different subunits: alpha, beta, gamma, delta and epsilon. Subunits alpha, beta and delta comprise a regulatory subcomplex and subunits epsilon and gamma comprise a catalytic subcomplex (PubMed:35031321, PubMed:8506384, PubMed:9472020). Within the complex, the hexameric regulatory complex resides at the center, with the two heterodimeric catalytic subcomplexes bound on opposite sides (By similarity).</text>
</comment>
<comment type="interaction">
    <interactant intactId="EBI-6260">
        <id>P32502</id>
    </interactant>
    <interactant intactId="EBI-6265">
        <id>P12754</id>
        <label>GCD2</label>
    </interactant>
    <organismsDiffer>false</organismsDiffer>
    <experiments>11</experiments>
</comment>
<comment type="interaction">
    <interactant intactId="EBI-6260">
        <id>P32502</id>
    </interactant>
    <interactant intactId="EBI-6253">
        <id>P14741</id>
        <label>GCN3</label>
    </interactant>
    <organismsDiffer>false</organismsDiffer>
    <experiments>11</experiments>
</comment>
<comment type="interaction">
    <interactant intactId="EBI-6260">
        <id>P32502</id>
    </interactant>
    <interactant intactId="EBI-32646">
        <id>Q02866</id>
        <label>MUK1</label>
    </interactant>
    <organismsDiffer>false</organismsDiffer>
    <experiments>3</experiments>
</comment>
<comment type="subcellular location">
    <subcellularLocation>
        <location evidence="1">Cytoplasm</location>
        <location evidence="1">Cytosol</location>
    </subcellularLocation>
</comment>
<comment type="miscellaneous">
    <text evidence="3">Present with 6650 molecules/cell in log phase SD medium.</text>
</comment>
<comment type="similarity">
    <text evidence="7">Belongs to the eIF-2B alpha/beta/delta subunits family.</text>
</comment>
<keyword id="KW-0002">3D-structure</keyword>
<keyword id="KW-0963">Cytoplasm</keyword>
<keyword id="KW-0396">Initiation factor</keyword>
<keyword id="KW-0648">Protein biosynthesis</keyword>
<keyword id="KW-1185">Reference proteome</keyword>
<keyword id="KW-0810">Translation regulation</keyword>
<reference key="1">
    <citation type="journal article" date="1993" name="Mol. Cell. Biol.">
        <title>Evidence that GCD6 and GCD7, translational regulators of GCN4, are subunits of the guanine nucleotide exchange factor for eIF-2 in Saccharomyces cerevisiae.</title>
        <authorList>
            <person name="Bushman J.L."/>
            <person name="Asuru A.I."/>
            <person name="Matts R.L."/>
            <person name="Hinnebusch A.G."/>
        </authorList>
    </citation>
    <scope>NUCLEOTIDE SEQUENCE [GENOMIC DNA]</scope>
</reference>
<reference key="2">
    <citation type="journal article" date="1997" name="Nature">
        <title>The nucleotide sequence of Saccharomyces cerevisiae chromosome XII.</title>
        <authorList>
            <person name="Johnston M."/>
            <person name="Hillier L.W."/>
            <person name="Riles L."/>
            <person name="Albermann K."/>
            <person name="Andre B."/>
            <person name="Ansorge W."/>
            <person name="Benes V."/>
            <person name="Brueckner M."/>
            <person name="Delius H."/>
            <person name="Dubois E."/>
            <person name="Duesterhoeft A."/>
            <person name="Entian K.-D."/>
            <person name="Floeth M."/>
            <person name="Goffeau A."/>
            <person name="Hebling U."/>
            <person name="Heumann K."/>
            <person name="Heuss-Neitzel D."/>
            <person name="Hilbert H."/>
            <person name="Hilger F."/>
            <person name="Kleine K."/>
            <person name="Koetter P."/>
            <person name="Louis E.J."/>
            <person name="Messenguy F."/>
            <person name="Mewes H.-W."/>
            <person name="Miosga T."/>
            <person name="Moestl D."/>
            <person name="Mueller-Auer S."/>
            <person name="Nentwich U."/>
            <person name="Obermaier B."/>
            <person name="Piravandi E."/>
            <person name="Pohl T.M."/>
            <person name="Portetelle D."/>
            <person name="Purnelle B."/>
            <person name="Rechmann S."/>
            <person name="Rieger M."/>
            <person name="Rinke M."/>
            <person name="Rose M."/>
            <person name="Scharfe M."/>
            <person name="Scherens B."/>
            <person name="Scholler P."/>
            <person name="Schwager C."/>
            <person name="Schwarz S."/>
            <person name="Underwood A.P."/>
            <person name="Urrestarazu L.A."/>
            <person name="Vandenbol M."/>
            <person name="Verhasselt P."/>
            <person name="Vierendeels F."/>
            <person name="Voet M."/>
            <person name="Volckaert G."/>
            <person name="Voss H."/>
            <person name="Wambutt R."/>
            <person name="Wedler E."/>
            <person name="Wedler H."/>
            <person name="Zimmermann F.K."/>
            <person name="Zollner A."/>
            <person name="Hani J."/>
            <person name="Hoheisel J.D."/>
        </authorList>
    </citation>
    <scope>NUCLEOTIDE SEQUENCE [LARGE SCALE GENOMIC DNA]</scope>
    <source>
        <strain>ATCC 204508 / S288c</strain>
    </source>
</reference>
<reference key="3">
    <citation type="journal article" date="2014" name="G3 (Bethesda)">
        <title>The reference genome sequence of Saccharomyces cerevisiae: Then and now.</title>
        <authorList>
            <person name="Engel S.R."/>
            <person name="Dietrich F.S."/>
            <person name="Fisk D.G."/>
            <person name="Binkley G."/>
            <person name="Balakrishnan R."/>
            <person name="Costanzo M.C."/>
            <person name="Dwight S.S."/>
            <person name="Hitz B.C."/>
            <person name="Karra K."/>
            <person name="Nash R.S."/>
            <person name="Weng S."/>
            <person name="Wong E.D."/>
            <person name="Lloyd P."/>
            <person name="Skrzypek M.S."/>
            <person name="Miyasato S.R."/>
            <person name="Simison M."/>
            <person name="Cherry J.M."/>
        </authorList>
    </citation>
    <scope>GENOME REANNOTATION</scope>
    <source>
        <strain>ATCC 204508 / S288c</strain>
    </source>
</reference>
<reference key="4">
    <citation type="journal article" date="1993" name="Proc. Natl. Acad. Sci. U.S.A.">
        <title>A protein complex of translational regulators of GCN4 mRNA is the guanine nucleotide-exchange factor for translation initiation factor 2 in yeast.</title>
        <authorList>
            <person name="Cigan A.M."/>
            <person name="Bushman J.L."/>
            <person name="Boal T.R."/>
            <person name="Hinnebusch A.G."/>
        </authorList>
    </citation>
    <scope>IDENTIFICATION IN THE EIF2-B COMPLEX</scope>
    <scope>FUNCTION OF THE EIF2-B COMPLEX</scope>
</reference>
<reference key="5">
    <citation type="journal article" date="1998" name="Genes Dev.">
        <title>eIF2 independently binds two distinct eIF2B subcomplexes that catalyze and regulate guanine-nucleotide exchange.</title>
        <authorList>
            <person name="Pavitt G.D."/>
            <person name="Ramaiah K.V."/>
            <person name="Kimball S.R."/>
            <person name="Hinnebusch A.G."/>
        </authorList>
    </citation>
    <scope>FUNCTION</scope>
    <scope>IDENTIFICATION IN A EIF2-B SUBCOMPLEX</scope>
</reference>
<reference key="6">
    <citation type="journal article" date="2003" name="Nature">
        <title>Global analysis of protein expression in yeast.</title>
        <authorList>
            <person name="Ghaemmaghami S."/>
            <person name="Huh W.-K."/>
            <person name="Bower K."/>
            <person name="Howson R.W."/>
            <person name="Belle A."/>
            <person name="Dephoure N."/>
            <person name="O'Shea E.K."/>
            <person name="Weissman J.S."/>
        </authorList>
    </citation>
    <scope>LEVEL OF PROTEIN EXPRESSION [LARGE SCALE ANALYSIS]</scope>
</reference>
<reference key="7">
    <citation type="journal article" date="2022" name="J. Biol. Chem.">
        <title>Stepwise assembly of the eukaryotic translation initiation factor 2 complex.</title>
        <authorList>
            <person name="Vanselow S."/>
            <person name="Neumann-Arnold L."/>
            <person name="Wojciech-Moock F."/>
            <person name="Seufert W."/>
        </authorList>
    </citation>
    <scope>INTERACTION WITH GCD11</scope>
</reference>
<proteinExistence type="evidence at protein level"/>